<protein>
    <recommendedName>
        <fullName>Uncharacterized protein YvnB</fullName>
    </recommendedName>
</protein>
<feature type="signal peptide" evidence="1">
    <location>
        <begin position="1"/>
        <end position="23"/>
    </location>
</feature>
<feature type="chain" id="PRO_0000361094" description="Uncharacterized protein YvnB">
    <location>
        <begin position="24"/>
        <end position="1289"/>
    </location>
</feature>
<feature type="domain" description="LTD" evidence="2">
    <location>
        <begin position="141"/>
        <end position="277"/>
    </location>
</feature>
<proteinExistence type="inferred from homology"/>
<organism>
    <name type="scientific">Bacillus subtilis (strain 168)</name>
    <dbReference type="NCBI Taxonomy" id="224308"/>
    <lineage>
        <taxon>Bacteria</taxon>
        <taxon>Bacillati</taxon>
        <taxon>Bacillota</taxon>
        <taxon>Bacilli</taxon>
        <taxon>Bacillales</taxon>
        <taxon>Bacillaceae</taxon>
        <taxon>Bacillus</taxon>
    </lineage>
</organism>
<evidence type="ECO:0000255" key="1"/>
<evidence type="ECO:0000255" key="2">
    <source>
        <dbReference type="PROSITE-ProRule" id="PRU01187"/>
    </source>
</evidence>
<gene>
    <name type="primary">yvnB</name>
    <name type="ordered locus">BSU35040</name>
</gene>
<reference key="1">
    <citation type="submission" date="1997-11" db="EMBL/GenBank/DDBJ databases">
        <title>Nucleotide sequence of the 300-304 chromosomal segment of Bacillus subtilis.</title>
        <authorList>
            <person name="Lazarevic V."/>
            <person name="Soldo B."/>
            <person name="Rivolta C."/>
            <person name="Reynolds S."/>
            <person name="Mauel C."/>
            <person name="Karamata D."/>
        </authorList>
    </citation>
    <scope>NUCLEOTIDE SEQUENCE [GENOMIC DNA]</scope>
</reference>
<reference key="2">
    <citation type="journal article" date="1997" name="Nature">
        <title>The complete genome sequence of the Gram-positive bacterium Bacillus subtilis.</title>
        <authorList>
            <person name="Kunst F."/>
            <person name="Ogasawara N."/>
            <person name="Moszer I."/>
            <person name="Albertini A.M."/>
            <person name="Alloni G."/>
            <person name="Azevedo V."/>
            <person name="Bertero M.G."/>
            <person name="Bessieres P."/>
            <person name="Bolotin A."/>
            <person name="Borchert S."/>
            <person name="Borriss R."/>
            <person name="Boursier L."/>
            <person name="Brans A."/>
            <person name="Braun M."/>
            <person name="Brignell S.C."/>
            <person name="Bron S."/>
            <person name="Brouillet S."/>
            <person name="Bruschi C.V."/>
            <person name="Caldwell B."/>
            <person name="Capuano V."/>
            <person name="Carter N.M."/>
            <person name="Choi S.-K."/>
            <person name="Codani J.-J."/>
            <person name="Connerton I.F."/>
            <person name="Cummings N.J."/>
            <person name="Daniel R.A."/>
            <person name="Denizot F."/>
            <person name="Devine K.M."/>
            <person name="Duesterhoeft A."/>
            <person name="Ehrlich S.D."/>
            <person name="Emmerson P.T."/>
            <person name="Entian K.-D."/>
            <person name="Errington J."/>
            <person name="Fabret C."/>
            <person name="Ferrari E."/>
            <person name="Foulger D."/>
            <person name="Fritz C."/>
            <person name="Fujita M."/>
            <person name="Fujita Y."/>
            <person name="Fuma S."/>
            <person name="Galizzi A."/>
            <person name="Galleron N."/>
            <person name="Ghim S.-Y."/>
            <person name="Glaser P."/>
            <person name="Goffeau A."/>
            <person name="Golightly E.J."/>
            <person name="Grandi G."/>
            <person name="Guiseppi G."/>
            <person name="Guy B.J."/>
            <person name="Haga K."/>
            <person name="Haiech J."/>
            <person name="Harwood C.R."/>
            <person name="Henaut A."/>
            <person name="Hilbert H."/>
            <person name="Holsappel S."/>
            <person name="Hosono S."/>
            <person name="Hullo M.-F."/>
            <person name="Itaya M."/>
            <person name="Jones L.-M."/>
            <person name="Joris B."/>
            <person name="Karamata D."/>
            <person name="Kasahara Y."/>
            <person name="Klaerr-Blanchard M."/>
            <person name="Klein C."/>
            <person name="Kobayashi Y."/>
            <person name="Koetter P."/>
            <person name="Koningstein G."/>
            <person name="Krogh S."/>
            <person name="Kumano M."/>
            <person name="Kurita K."/>
            <person name="Lapidus A."/>
            <person name="Lardinois S."/>
            <person name="Lauber J."/>
            <person name="Lazarevic V."/>
            <person name="Lee S.-M."/>
            <person name="Levine A."/>
            <person name="Liu H."/>
            <person name="Masuda S."/>
            <person name="Mauel C."/>
            <person name="Medigue C."/>
            <person name="Medina N."/>
            <person name="Mellado R.P."/>
            <person name="Mizuno M."/>
            <person name="Moestl D."/>
            <person name="Nakai S."/>
            <person name="Noback M."/>
            <person name="Noone D."/>
            <person name="O'Reilly M."/>
            <person name="Ogawa K."/>
            <person name="Ogiwara A."/>
            <person name="Oudega B."/>
            <person name="Park S.-H."/>
            <person name="Parro V."/>
            <person name="Pohl T.M."/>
            <person name="Portetelle D."/>
            <person name="Porwollik S."/>
            <person name="Prescott A.M."/>
            <person name="Presecan E."/>
            <person name="Pujic P."/>
            <person name="Purnelle B."/>
            <person name="Rapoport G."/>
            <person name="Rey M."/>
            <person name="Reynolds S."/>
            <person name="Rieger M."/>
            <person name="Rivolta C."/>
            <person name="Rocha E."/>
            <person name="Roche B."/>
            <person name="Rose M."/>
            <person name="Sadaie Y."/>
            <person name="Sato T."/>
            <person name="Scanlan E."/>
            <person name="Schleich S."/>
            <person name="Schroeter R."/>
            <person name="Scoffone F."/>
            <person name="Sekiguchi J."/>
            <person name="Sekowska A."/>
            <person name="Seror S.J."/>
            <person name="Serror P."/>
            <person name="Shin B.-S."/>
            <person name="Soldo B."/>
            <person name="Sorokin A."/>
            <person name="Tacconi E."/>
            <person name="Takagi T."/>
            <person name="Takahashi H."/>
            <person name="Takemaru K."/>
            <person name="Takeuchi M."/>
            <person name="Tamakoshi A."/>
            <person name="Tanaka T."/>
            <person name="Terpstra P."/>
            <person name="Tognoni A."/>
            <person name="Tosato V."/>
            <person name="Uchiyama S."/>
            <person name="Vandenbol M."/>
            <person name="Vannier F."/>
            <person name="Vassarotti A."/>
            <person name="Viari A."/>
            <person name="Wambutt R."/>
            <person name="Wedler E."/>
            <person name="Wedler H."/>
            <person name="Weitzenegger T."/>
            <person name="Winters P."/>
            <person name="Wipat A."/>
            <person name="Yamamoto H."/>
            <person name="Yamane K."/>
            <person name="Yasumoto K."/>
            <person name="Yata K."/>
            <person name="Yoshida K."/>
            <person name="Yoshikawa H.-F."/>
            <person name="Zumstein E."/>
            <person name="Yoshikawa H."/>
            <person name="Danchin A."/>
        </authorList>
    </citation>
    <scope>NUCLEOTIDE SEQUENCE [LARGE SCALE GENOMIC DNA]</scope>
    <source>
        <strain>168</strain>
    </source>
</reference>
<keyword id="KW-1185">Reference proteome</keyword>
<keyword id="KW-0732">Signal</keyword>
<name>YVNB_BACSU</name>
<accession>O34986</accession>
<accession>Q795E8</accession>
<sequence>MRKYTVIASILLSFLSVLSGGHHESKAFPVVQQELFQTPHYIPLLENPPQIDVKAEMRSNLMIEAQVRDNSYQAFSAFLFYKQSNELGYKMVPMDPTPGAVRKFLAQIPKRLIWNSELEYYIVMSNGKQRVESETKKLKLEGYQADLAHIPELLITELAVDTKNIGRADGYEFIEIFNTTDRTIDFKDYHIRYRYPKEGPDSDLIWRPDERILIPSGETFVVWLKPAGHPELTSADFNRYYQTQLKEGKNLAVIDETEGMANTRPRAVVISTNTGKDISVAHYRKHALRRLSSVLYKYPLNGTAELLNISIGEKNPSPGTVLQAQVPDQKRKIKLDKEKPVIEDLTDRKPVRPAESIELRADIRDRSLVKTVAFYYRTDENKPFKRILAEKDRNDNLFHYIVYSPELIGKDQLEYYVAAGDGINEARTPVKMIDIKQTSKAHGLRMNIENRDTLSGTQFLKATTEGRADSIKLWIDGKKQVTEPAMEKEVYFAFDTRKTNLYFKNAVTMEGKVLKVFDDTTNKYRTYSVPLPETLLRKGKQLQRITIRSGSKVSPFDTAENRDDFLVKNARLVLSDGTVIRDQRVSPEKELFIGDNQRSNKSWQFQFNLPDGLFTSQLLEWDTSKLSEGAHHIQASDGKENVSLVVRVDNSGPHIEPNITEGQTYKGNLILQADMYDKWSRIEEAEASLDGESITLPYHTSSSDLLPGKHSLKVTATDLAGNKTVIERIFKTEREHPDQPEVIDSEADTHKAKLSVRVKDPTNDAMDVGFYRGFQYTARNHVKIFKHASLTEPPKSFVPERETPFTNKELERVSAADGKTVSTENKELFPYHRFEVTVDPSIDENDLAESVWKGSSLPGRKVTMYAWNYRTNEWQPVDSFVAKDDKPFTLKASVIAADFVRESKMNVIVQDEIPPAKDMYTFVWMSDTQYYAESYPHIFDKQTEWIKDNQKQLNIKYVFHTGDIVDDSADIRQWKNADRSMSVLDKSGIPYGVLAGNHDVGHKDGSYRAFGKYFGSDRFDKKFHYGGSYKNNRGHYDLISSNGNDYIMLYMGWGITDEDIAWMNQVLKKHPDRMAILAFHEYLLVSGNRSPIGEKIFKEIVKPNPNVVMVLSGHYHSAMRKTDELDDDGDGKPDRLVHQMLADYQGGPEGGQGYLRLLQFDQANDMVHVSTYSPYVKDKNYYDTDTYGNKDEFSLSLDLKPRIKKVETDYFECNVYTNEELGKREQVKSGDTAEFRWDHLEPQSVYYWYIIVEDSFNGKTKSPIWKFKTKKETYRPAPDQFDFRHVSNP</sequence>
<dbReference type="EMBL" id="AF017113">
    <property type="protein sequence ID" value="AAC67282.1"/>
    <property type="molecule type" value="Genomic_DNA"/>
</dbReference>
<dbReference type="EMBL" id="AL009126">
    <property type="protein sequence ID" value="CAB15509.1"/>
    <property type="molecule type" value="Genomic_DNA"/>
</dbReference>
<dbReference type="PIR" id="C70044">
    <property type="entry name" value="C70044"/>
</dbReference>
<dbReference type="RefSeq" id="NP_391384.1">
    <property type="nucleotide sequence ID" value="NC_000964.3"/>
</dbReference>
<dbReference type="RefSeq" id="WP_003228085.1">
    <property type="nucleotide sequence ID" value="NZ_OZ025638.1"/>
</dbReference>
<dbReference type="FunCoup" id="O34986">
    <property type="interactions" value="44"/>
</dbReference>
<dbReference type="STRING" id="224308.BSU35040"/>
<dbReference type="PaxDb" id="224308-BSU35040"/>
<dbReference type="EnsemblBacteria" id="CAB15509">
    <property type="protein sequence ID" value="CAB15509"/>
    <property type="gene ID" value="BSU_35040"/>
</dbReference>
<dbReference type="GeneID" id="936623"/>
<dbReference type="KEGG" id="bsu:BSU35040"/>
<dbReference type="PATRIC" id="fig|224308.179.peg.3792"/>
<dbReference type="eggNOG" id="COG1409">
    <property type="taxonomic scope" value="Bacteria"/>
</dbReference>
<dbReference type="InParanoid" id="O34986"/>
<dbReference type="OrthoDB" id="9772095at2"/>
<dbReference type="BioCyc" id="BSUB:BSU35040-MONOMER"/>
<dbReference type="Proteomes" id="UP000001570">
    <property type="component" value="Chromosome"/>
</dbReference>
<dbReference type="GO" id="GO:0016787">
    <property type="term" value="F:hydrolase activity"/>
    <property type="evidence" value="ECO:0007669"/>
    <property type="project" value="InterPro"/>
</dbReference>
<dbReference type="CDD" id="cd07399">
    <property type="entry name" value="MPP_YvnB"/>
    <property type="match status" value="1"/>
</dbReference>
<dbReference type="Gene3D" id="3.60.21.10">
    <property type="match status" value="1"/>
</dbReference>
<dbReference type="InterPro" id="IPR004843">
    <property type="entry name" value="Calcineurin-like_PHP_ApaH"/>
</dbReference>
<dbReference type="InterPro" id="IPR001322">
    <property type="entry name" value="Lamin_tail_dom"/>
</dbReference>
<dbReference type="InterPro" id="IPR036415">
    <property type="entry name" value="Lamin_tail_dom_sf"/>
</dbReference>
<dbReference type="InterPro" id="IPR029052">
    <property type="entry name" value="Metallo-depent_PP-like"/>
</dbReference>
<dbReference type="InterPro" id="IPR011401">
    <property type="entry name" value="Pesterase_YvnB"/>
</dbReference>
<dbReference type="InterPro" id="IPR051918">
    <property type="entry name" value="STPP_CPPED1"/>
</dbReference>
<dbReference type="PANTHER" id="PTHR43143">
    <property type="entry name" value="METALLOPHOSPHOESTERASE, CALCINEURIN SUPERFAMILY"/>
    <property type="match status" value="1"/>
</dbReference>
<dbReference type="PANTHER" id="PTHR43143:SF5">
    <property type="entry name" value="SECRETED PROTEIN"/>
    <property type="match status" value="1"/>
</dbReference>
<dbReference type="Pfam" id="PF00149">
    <property type="entry name" value="Metallophos"/>
    <property type="match status" value="1"/>
</dbReference>
<dbReference type="PIRSF" id="PIRSF036444">
    <property type="entry name" value="Pesterase_YvnB"/>
    <property type="match status" value="1"/>
</dbReference>
<dbReference type="SUPFAM" id="SSF74853">
    <property type="entry name" value="Lamin A/C globular tail domain"/>
    <property type="match status" value="1"/>
</dbReference>
<dbReference type="SUPFAM" id="SSF56300">
    <property type="entry name" value="Metallo-dependent phosphatases"/>
    <property type="match status" value="1"/>
</dbReference>
<dbReference type="PROSITE" id="PS51841">
    <property type="entry name" value="LTD"/>
    <property type="match status" value="1"/>
</dbReference>